<comment type="function">
    <text evidence="2">Forms part of the ribosomal stalk which helps the ribosome interact with GTP-bound translation factors. Is thus essential for accurate translation.</text>
</comment>
<comment type="subunit">
    <text evidence="2">Homodimer. Part of the ribosomal stalk of the 50S ribosomal subunit. Forms a multimeric L10(L12)X complex, where L10 forms an elongated spine to which 2 to 4 L12 dimers bind in a sequential fashion. Binds GTP-bound translation factors.</text>
</comment>
<comment type="PTM">
    <text evidence="1">Acetylation of Ser-2 converts L12 to L7.</text>
</comment>
<comment type="similarity">
    <text evidence="2">Belongs to the bacterial ribosomal protein bL12 family.</text>
</comment>
<comment type="sequence caution" evidence="3">
    <conflict type="erroneous initiation">
        <sequence resource="EMBL-CDS" id="AAX67942"/>
    </conflict>
</comment>
<dbReference type="EMBL" id="AE017220">
    <property type="protein sequence ID" value="AAX67942.1"/>
    <property type="status" value="ALT_INIT"/>
    <property type="molecule type" value="Genomic_DNA"/>
</dbReference>
<dbReference type="RefSeq" id="WP_000028882.1">
    <property type="nucleotide sequence ID" value="NC_006905.1"/>
</dbReference>
<dbReference type="SMR" id="Q57H70"/>
<dbReference type="GeneID" id="89551069"/>
<dbReference type="KEGG" id="sec:SCH_4036"/>
<dbReference type="HOGENOM" id="CLU_086499_3_1_6"/>
<dbReference type="Proteomes" id="UP000000538">
    <property type="component" value="Chromosome"/>
</dbReference>
<dbReference type="GO" id="GO:0022625">
    <property type="term" value="C:cytosolic large ribosomal subunit"/>
    <property type="evidence" value="ECO:0007669"/>
    <property type="project" value="TreeGrafter"/>
</dbReference>
<dbReference type="GO" id="GO:0003729">
    <property type="term" value="F:mRNA binding"/>
    <property type="evidence" value="ECO:0007669"/>
    <property type="project" value="TreeGrafter"/>
</dbReference>
<dbReference type="GO" id="GO:0003735">
    <property type="term" value="F:structural constituent of ribosome"/>
    <property type="evidence" value="ECO:0007669"/>
    <property type="project" value="InterPro"/>
</dbReference>
<dbReference type="GO" id="GO:0006412">
    <property type="term" value="P:translation"/>
    <property type="evidence" value="ECO:0007669"/>
    <property type="project" value="UniProtKB-UniRule"/>
</dbReference>
<dbReference type="CDD" id="cd00387">
    <property type="entry name" value="Ribosomal_L7_L12"/>
    <property type="match status" value="1"/>
</dbReference>
<dbReference type="FunFam" id="1.20.5.710:FF:000001">
    <property type="entry name" value="50S ribosomal protein L7/L12"/>
    <property type="match status" value="1"/>
</dbReference>
<dbReference type="FunFam" id="3.30.1390.10:FF:000001">
    <property type="entry name" value="50S ribosomal protein L7/L12"/>
    <property type="match status" value="1"/>
</dbReference>
<dbReference type="Gene3D" id="3.30.1390.10">
    <property type="match status" value="1"/>
</dbReference>
<dbReference type="Gene3D" id="1.20.5.710">
    <property type="entry name" value="Single helix bin"/>
    <property type="match status" value="1"/>
</dbReference>
<dbReference type="HAMAP" id="MF_00368">
    <property type="entry name" value="Ribosomal_bL12"/>
    <property type="match status" value="1"/>
</dbReference>
<dbReference type="InterPro" id="IPR000206">
    <property type="entry name" value="Ribosomal_bL12"/>
</dbReference>
<dbReference type="InterPro" id="IPR013823">
    <property type="entry name" value="Ribosomal_bL12_C"/>
</dbReference>
<dbReference type="InterPro" id="IPR014719">
    <property type="entry name" value="Ribosomal_bL12_C/ClpS-like"/>
</dbReference>
<dbReference type="InterPro" id="IPR008932">
    <property type="entry name" value="Ribosomal_bL12_oligo"/>
</dbReference>
<dbReference type="InterPro" id="IPR036235">
    <property type="entry name" value="Ribosomal_bL12_oligo_N_sf"/>
</dbReference>
<dbReference type="NCBIfam" id="TIGR00855">
    <property type="entry name" value="L12"/>
    <property type="match status" value="1"/>
</dbReference>
<dbReference type="PANTHER" id="PTHR45987">
    <property type="entry name" value="39S RIBOSOMAL PROTEIN L12"/>
    <property type="match status" value="1"/>
</dbReference>
<dbReference type="PANTHER" id="PTHR45987:SF4">
    <property type="entry name" value="LARGE RIBOSOMAL SUBUNIT PROTEIN BL12M"/>
    <property type="match status" value="1"/>
</dbReference>
<dbReference type="Pfam" id="PF00542">
    <property type="entry name" value="Ribosomal_L12"/>
    <property type="match status" value="1"/>
</dbReference>
<dbReference type="Pfam" id="PF16320">
    <property type="entry name" value="Ribosomal_L12_N"/>
    <property type="match status" value="1"/>
</dbReference>
<dbReference type="SUPFAM" id="SSF54736">
    <property type="entry name" value="ClpS-like"/>
    <property type="match status" value="1"/>
</dbReference>
<dbReference type="SUPFAM" id="SSF48300">
    <property type="entry name" value="Ribosomal protein L7/12, oligomerisation (N-terminal) domain"/>
    <property type="match status" value="1"/>
</dbReference>
<sequence>MSITKDQIIEAVSAMSVMDVVELISAMEEKFGVSAAAAVAVAAGPAEAAEEKTEFDVILKAAGANKVAVIKAVRGATGLGLKEAKDLVESAPAALKEGVSKDDAEALKKSLEEAGAEVEVK</sequence>
<proteinExistence type="inferred from homology"/>
<evidence type="ECO:0000250" key="1"/>
<evidence type="ECO:0000255" key="2">
    <source>
        <dbReference type="HAMAP-Rule" id="MF_00368"/>
    </source>
</evidence>
<evidence type="ECO:0000305" key="3"/>
<protein>
    <recommendedName>
        <fullName evidence="2">Large ribosomal subunit protein bL12</fullName>
    </recommendedName>
    <alternativeName>
        <fullName evidence="3">50S ribosomal protein L7/L12</fullName>
    </alternativeName>
</protein>
<gene>
    <name evidence="2" type="primary">rplL</name>
    <name type="ordered locus">SCH_4036</name>
</gene>
<feature type="initiator methionine" description="Removed" evidence="1">
    <location>
        <position position="1"/>
    </location>
</feature>
<feature type="chain" id="PRO_0000243490" description="Large ribosomal subunit protein bL12">
    <location>
        <begin position="2"/>
        <end position="121"/>
    </location>
</feature>
<feature type="modified residue" description="N-acetylserine; in form L7" evidence="1">
    <location>
        <position position="2"/>
    </location>
</feature>
<keyword id="KW-0007">Acetylation</keyword>
<keyword id="KW-0687">Ribonucleoprotein</keyword>
<keyword id="KW-0689">Ribosomal protein</keyword>
<organism>
    <name type="scientific">Salmonella choleraesuis (strain SC-B67)</name>
    <dbReference type="NCBI Taxonomy" id="321314"/>
    <lineage>
        <taxon>Bacteria</taxon>
        <taxon>Pseudomonadati</taxon>
        <taxon>Pseudomonadota</taxon>
        <taxon>Gammaproteobacteria</taxon>
        <taxon>Enterobacterales</taxon>
        <taxon>Enterobacteriaceae</taxon>
        <taxon>Salmonella</taxon>
    </lineage>
</organism>
<reference key="1">
    <citation type="journal article" date="2005" name="Nucleic Acids Res.">
        <title>The genome sequence of Salmonella enterica serovar Choleraesuis, a highly invasive and resistant zoonotic pathogen.</title>
        <authorList>
            <person name="Chiu C.-H."/>
            <person name="Tang P."/>
            <person name="Chu C."/>
            <person name="Hu S."/>
            <person name="Bao Q."/>
            <person name="Yu J."/>
            <person name="Chou Y.-Y."/>
            <person name="Wang H.-S."/>
            <person name="Lee Y.-S."/>
        </authorList>
    </citation>
    <scope>NUCLEOTIDE SEQUENCE [LARGE SCALE GENOMIC DNA]</scope>
    <source>
        <strain>SC-B67</strain>
    </source>
</reference>
<name>RL7_SALCH</name>
<accession>Q57H70</accession>